<gene>
    <name evidence="2" type="primary">ureB</name>
    <name type="ordered locus">UPA3_0452</name>
</gene>
<protein>
    <recommendedName>
        <fullName evidence="2">Urease subunit beta</fullName>
        <ecNumber evidence="2">3.5.1.5</ecNumber>
    </recommendedName>
    <alternativeName>
        <fullName evidence="2">Urea amidohydrolase subunit beta</fullName>
    </alternativeName>
</protein>
<proteinExistence type="inferred from homology"/>
<evidence type="ECO:0000250" key="1"/>
<evidence type="ECO:0000255" key="2">
    <source>
        <dbReference type="HAMAP-Rule" id="MF_01954"/>
    </source>
</evidence>
<feature type="initiator methionine" description="Removed" evidence="1">
    <location>
        <position position="1"/>
    </location>
</feature>
<feature type="chain" id="PRO_1000088513" description="Urease subunit beta">
    <location>
        <begin position="2"/>
        <end position="124"/>
    </location>
</feature>
<comment type="catalytic activity">
    <reaction evidence="2">
        <text>urea + 2 H2O + H(+) = hydrogencarbonate + 2 NH4(+)</text>
        <dbReference type="Rhea" id="RHEA:20557"/>
        <dbReference type="ChEBI" id="CHEBI:15377"/>
        <dbReference type="ChEBI" id="CHEBI:15378"/>
        <dbReference type="ChEBI" id="CHEBI:16199"/>
        <dbReference type="ChEBI" id="CHEBI:17544"/>
        <dbReference type="ChEBI" id="CHEBI:28938"/>
        <dbReference type="EC" id="3.5.1.5"/>
    </reaction>
</comment>
<comment type="pathway">
    <text evidence="2">Nitrogen metabolism; urea degradation; CO(2) and NH(3) from urea (urease route): step 1/1.</text>
</comment>
<comment type="subunit">
    <text evidence="2">Heterotrimer of UreA (gamma), UreB (beta) and UreC (alpha) subunits. Three heterotrimers associate to form the active enzyme.</text>
</comment>
<comment type="subcellular location">
    <subcellularLocation>
        <location evidence="2">Cytoplasm</location>
    </subcellularLocation>
</comment>
<comment type="similarity">
    <text evidence="2">Belongs to the urease beta subunit family.</text>
</comment>
<reference key="1">
    <citation type="journal article" date="1999" name="Int. J. Syst. Bacteriol.">
        <title>Phylogenetic analysis of Ureaplasma urealyticum -- support for the establishment of a new species, Ureaplasma parvum.</title>
        <authorList>
            <person name="Kong F."/>
            <person name="James G."/>
            <person name="Ma Z."/>
            <person name="Gordon S."/>
            <person name="Wang B."/>
            <person name="Gilbert G.L."/>
        </authorList>
    </citation>
    <scope>NUCLEOTIDE SEQUENCE [GENOMIC DNA]</scope>
</reference>
<reference key="2">
    <citation type="submission" date="2008-02" db="EMBL/GenBank/DDBJ databases">
        <title>Genome sequence of Ureaplasma parvum serovar 3.</title>
        <authorList>
            <person name="Methe B.A."/>
            <person name="Glass J."/>
            <person name="Waites K."/>
            <person name="Shrivastava S."/>
        </authorList>
    </citation>
    <scope>NUCLEOTIDE SEQUENCE [LARGE SCALE GENOMIC DNA]</scope>
    <source>
        <strain>ATCC 27815 / 27 / NCTC 11736</strain>
    </source>
</reference>
<sequence>MSGSSSQFSPGKLVPGAINFASGEIVMNEGREAKVISIKNTGDRPIQVGSHFHLFEVNSALVFFDEKGNEDKERKVAYGRRFDIPSGTAIRFEPGDKKEVSIIDLAGTREVWGVNGLVNGKLKK</sequence>
<name>URE2_UREP2</name>
<accession>B1AJ74</accession>
<accession>Q56558</accession>
<keyword id="KW-0963">Cytoplasm</keyword>
<keyword id="KW-0378">Hydrolase</keyword>
<dbReference type="EC" id="3.5.1.5" evidence="2"/>
<dbReference type="EMBL" id="AF085732">
    <property type="protein sequence ID" value="AAD28141.1"/>
    <property type="molecule type" value="Genomic_DNA"/>
</dbReference>
<dbReference type="EMBL" id="CP000942">
    <property type="protein sequence ID" value="ACA32991.1"/>
    <property type="molecule type" value="Genomic_DNA"/>
</dbReference>
<dbReference type="RefSeq" id="WP_006688518.1">
    <property type="nucleotide sequence ID" value="NC_010503.1"/>
</dbReference>
<dbReference type="SMR" id="B1AJ74"/>
<dbReference type="GeneID" id="29672369"/>
<dbReference type="KEGG" id="upa:UPA3_0452"/>
<dbReference type="HOGENOM" id="CLU_129707_1_1_14"/>
<dbReference type="UniPathway" id="UPA00258">
    <property type="reaction ID" value="UER00370"/>
</dbReference>
<dbReference type="Proteomes" id="UP000002162">
    <property type="component" value="Chromosome"/>
</dbReference>
<dbReference type="GO" id="GO:0035550">
    <property type="term" value="C:urease complex"/>
    <property type="evidence" value="ECO:0007669"/>
    <property type="project" value="InterPro"/>
</dbReference>
<dbReference type="GO" id="GO:0009039">
    <property type="term" value="F:urease activity"/>
    <property type="evidence" value="ECO:0007669"/>
    <property type="project" value="UniProtKB-UniRule"/>
</dbReference>
<dbReference type="GO" id="GO:0043419">
    <property type="term" value="P:urea catabolic process"/>
    <property type="evidence" value="ECO:0007669"/>
    <property type="project" value="UniProtKB-UniRule"/>
</dbReference>
<dbReference type="CDD" id="cd00407">
    <property type="entry name" value="Urease_beta"/>
    <property type="match status" value="1"/>
</dbReference>
<dbReference type="Gene3D" id="2.10.150.10">
    <property type="entry name" value="Urease, beta subunit"/>
    <property type="match status" value="1"/>
</dbReference>
<dbReference type="HAMAP" id="MF_01954">
    <property type="entry name" value="Urease_beta"/>
    <property type="match status" value="1"/>
</dbReference>
<dbReference type="InterPro" id="IPR002019">
    <property type="entry name" value="Urease_beta-like"/>
</dbReference>
<dbReference type="InterPro" id="IPR036461">
    <property type="entry name" value="Urease_betasu_sf"/>
</dbReference>
<dbReference type="InterPro" id="IPR050069">
    <property type="entry name" value="Urease_subunit"/>
</dbReference>
<dbReference type="NCBIfam" id="NF009682">
    <property type="entry name" value="PRK13203.1"/>
    <property type="match status" value="1"/>
</dbReference>
<dbReference type="NCBIfam" id="TIGR00192">
    <property type="entry name" value="urease_beta"/>
    <property type="match status" value="1"/>
</dbReference>
<dbReference type="PANTHER" id="PTHR33569">
    <property type="entry name" value="UREASE"/>
    <property type="match status" value="1"/>
</dbReference>
<dbReference type="PANTHER" id="PTHR33569:SF1">
    <property type="entry name" value="UREASE"/>
    <property type="match status" value="1"/>
</dbReference>
<dbReference type="Pfam" id="PF00699">
    <property type="entry name" value="Urease_beta"/>
    <property type="match status" value="1"/>
</dbReference>
<dbReference type="SUPFAM" id="SSF51278">
    <property type="entry name" value="Urease, beta-subunit"/>
    <property type="match status" value="1"/>
</dbReference>
<organism>
    <name type="scientific">Ureaplasma parvum serovar 3 (strain ATCC 27815 / 27 / NCTC 11736)</name>
    <dbReference type="NCBI Taxonomy" id="505682"/>
    <lineage>
        <taxon>Bacteria</taxon>
        <taxon>Bacillati</taxon>
        <taxon>Mycoplasmatota</taxon>
        <taxon>Mycoplasmoidales</taxon>
        <taxon>Mycoplasmoidaceae</taxon>
        <taxon>Ureaplasma</taxon>
    </lineage>
</organism>